<keyword id="KW-0131">Cell cycle</keyword>
<keyword id="KW-0132">Cell division</keyword>
<keyword id="KW-1003">Cell membrane</keyword>
<keyword id="KW-0133">Cell shape</keyword>
<keyword id="KW-0961">Cell wall biogenesis/degradation</keyword>
<keyword id="KW-0460">Magnesium</keyword>
<keyword id="KW-0472">Membrane</keyword>
<keyword id="KW-0479">Metal-binding</keyword>
<keyword id="KW-0573">Peptidoglycan synthesis</keyword>
<keyword id="KW-1185">Reference proteome</keyword>
<keyword id="KW-0808">Transferase</keyword>
<keyword id="KW-0812">Transmembrane</keyword>
<keyword id="KW-1133">Transmembrane helix</keyword>
<accession>Q82AD9</accession>
<gene>
    <name evidence="1" type="primary">mraY</name>
    <name type="ordered locus">SAV_6119</name>
</gene>
<evidence type="ECO:0000255" key="1">
    <source>
        <dbReference type="HAMAP-Rule" id="MF_00038"/>
    </source>
</evidence>
<organism>
    <name type="scientific">Streptomyces avermitilis (strain ATCC 31267 / DSM 46492 / JCM 5070 / NBRC 14893 / NCIMB 12804 / NRRL 8165 / MA-4680)</name>
    <dbReference type="NCBI Taxonomy" id="227882"/>
    <lineage>
        <taxon>Bacteria</taxon>
        <taxon>Bacillati</taxon>
        <taxon>Actinomycetota</taxon>
        <taxon>Actinomycetes</taxon>
        <taxon>Kitasatosporales</taxon>
        <taxon>Streptomycetaceae</taxon>
        <taxon>Streptomyces</taxon>
    </lineage>
</organism>
<proteinExistence type="inferred from homology"/>
<reference key="1">
    <citation type="journal article" date="2001" name="Proc. Natl. Acad. Sci. U.S.A.">
        <title>Genome sequence of an industrial microorganism Streptomyces avermitilis: deducing the ability of producing secondary metabolites.</title>
        <authorList>
            <person name="Omura S."/>
            <person name="Ikeda H."/>
            <person name="Ishikawa J."/>
            <person name="Hanamoto A."/>
            <person name="Takahashi C."/>
            <person name="Shinose M."/>
            <person name="Takahashi Y."/>
            <person name="Horikawa H."/>
            <person name="Nakazawa H."/>
            <person name="Osonoe T."/>
            <person name="Kikuchi H."/>
            <person name="Shiba T."/>
            <person name="Sakaki Y."/>
            <person name="Hattori M."/>
        </authorList>
    </citation>
    <scope>NUCLEOTIDE SEQUENCE [LARGE SCALE GENOMIC DNA]</scope>
    <source>
        <strain>ATCC 31267 / DSM 46492 / JCM 5070 / NBRC 14893 / NCIMB 12804 / NRRL 8165 / MA-4680</strain>
    </source>
</reference>
<reference key="2">
    <citation type="journal article" date="2003" name="Nat. Biotechnol.">
        <title>Complete genome sequence and comparative analysis of the industrial microorganism Streptomyces avermitilis.</title>
        <authorList>
            <person name="Ikeda H."/>
            <person name="Ishikawa J."/>
            <person name="Hanamoto A."/>
            <person name="Shinose M."/>
            <person name="Kikuchi H."/>
            <person name="Shiba T."/>
            <person name="Sakaki Y."/>
            <person name="Hattori M."/>
            <person name="Omura S."/>
        </authorList>
    </citation>
    <scope>NUCLEOTIDE SEQUENCE [LARGE SCALE GENOMIC DNA]</scope>
    <source>
        <strain>ATCC 31267 / DSM 46492 / JCM 5070 / NBRC 14893 / NCIMB 12804 / NRRL 8165 / MA-4680</strain>
    </source>
</reference>
<comment type="function">
    <text evidence="1">Catalyzes the initial step of the lipid cycle reactions in the biosynthesis of the cell wall peptidoglycan: transfers peptidoglycan precursor phospho-MurNAc-pentapeptide from UDP-MurNAc-pentapeptide onto the lipid carrier undecaprenyl phosphate, yielding undecaprenyl-pyrophosphoryl-MurNAc-pentapeptide, known as lipid I.</text>
</comment>
<comment type="catalytic activity">
    <reaction evidence="1">
        <text>UDP-N-acetyl-alpha-D-muramoyl-L-alanyl-gamma-D-glutamyl-meso-2,6-diaminopimeloyl-D-alanyl-D-alanine + di-trans,octa-cis-undecaprenyl phosphate = di-trans,octa-cis-undecaprenyl diphospho-N-acetyl-alpha-D-muramoyl-L-alanyl-D-glutamyl-meso-2,6-diaminopimeloyl-D-alanyl-D-alanine + UMP</text>
        <dbReference type="Rhea" id="RHEA:28386"/>
        <dbReference type="ChEBI" id="CHEBI:57865"/>
        <dbReference type="ChEBI" id="CHEBI:60392"/>
        <dbReference type="ChEBI" id="CHEBI:61386"/>
        <dbReference type="ChEBI" id="CHEBI:61387"/>
        <dbReference type="EC" id="2.7.8.13"/>
    </reaction>
</comment>
<comment type="cofactor">
    <cofactor evidence="1">
        <name>Mg(2+)</name>
        <dbReference type="ChEBI" id="CHEBI:18420"/>
    </cofactor>
</comment>
<comment type="pathway">
    <text evidence="1">Cell wall biogenesis; peptidoglycan biosynthesis.</text>
</comment>
<comment type="subcellular location">
    <subcellularLocation>
        <location evidence="1">Cell membrane</location>
        <topology evidence="1">Multi-pass membrane protein</topology>
    </subcellularLocation>
</comment>
<comment type="similarity">
    <text evidence="1">Belongs to the glycosyltransferase 4 family. MraY subfamily.</text>
</comment>
<name>MRAY_STRAW</name>
<dbReference type="EC" id="2.7.8.13" evidence="1"/>
<dbReference type="EMBL" id="BA000030">
    <property type="protein sequence ID" value="BAC73830.1"/>
    <property type="molecule type" value="Genomic_DNA"/>
</dbReference>
<dbReference type="RefSeq" id="WP_010987520.1">
    <property type="nucleotide sequence ID" value="NZ_JZJK01000089.1"/>
</dbReference>
<dbReference type="SMR" id="Q82AD9"/>
<dbReference type="GeneID" id="41543196"/>
<dbReference type="KEGG" id="sma:SAVERM_6119"/>
<dbReference type="eggNOG" id="COG0472">
    <property type="taxonomic scope" value="Bacteria"/>
</dbReference>
<dbReference type="HOGENOM" id="CLU_023982_0_1_11"/>
<dbReference type="OrthoDB" id="9805475at2"/>
<dbReference type="UniPathway" id="UPA00219"/>
<dbReference type="Proteomes" id="UP000000428">
    <property type="component" value="Chromosome"/>
</dbReference>
<dbReference type="GO" id="GO:0005886">
    <property type="term" value="C:plasma membrane"/>
    <property type="evidence" value="ECO:0007669"/>
    <property type="project" value="UniProtKB-SubCell"/>
</dbReference>
<dbReference type="GO" id="GO:0046872">
    <property type="term" value="F:metal ion binding"/>
    <property type="evidence" value="ECO:0007669"/>
    <property type="project" value="UniProtKB-KW"/>
</dbReference>
<dbReference type="GO" id="GO:0008963">
    <property type="term" value="F:phospho-N-acetylmuramoyl-pentapeptide-transferase activity"/>
    <property type="evidence" value="ECO:0007669"/>
    <property type="project" value="UniProtKB-UniRule"/>
</dbReference>
<dbReference type="GO" id="GO:0051992">
    <property type="term" value="F:UDP-N-acetylmuramoyl-L-alanyl-D-glutamyl-meso-2,6-diaminopimelyl-D-alanyl-D-alanine:undecaprenyl-phosphate transferase activity"/>
    <property type="evidence" value="ECO:0007669"/>
    <property type="project" value="RHEA"/>
</dbReference>
<dbReference type="GO" id="GO:0051301">
    <property type="term" value="P:cell division"/>
    <property type="evidence" value="ECO:0007669"/>
    <property type="project" value="UniProtKB-KW"/>
</dbReference>
<dbReference type="GO" id="GO:0071555">
    <property type="term" value="P:cell wall organization"/>
    <property type="evidence" value="ECO:0007669"/>
    <property type="project" value="UniProtKB-KW"/>
</dbReference>
<dbReference type="GO" id="GO:0009252">
    <property type="term" value="P:peptidoglycan biosynthetic process"/>
    <property type="evidence" value="ECO:0007669"/>
    <property type="project" value="UniProtKB-UniRule"/>
</dbReference>
<dbReference type="GO" id="GO:0008360">
    <property type="term" value="P:regulation of cell shape"/>
    <property type="evidence" value="ECO:0007669"/>
    <property type="project" value="UniProtKB-KW"/>
</dbReference>
<dbReference type="CDD" id="cd06852">
    <property type="entry name" value="GT_MraY"/>
    <property type="match status" value="1"/>
</dbReference>
<dbReference type="HAMAP" id="MF_00038">
    <property type="entry name" value="MraY"/>
    <property type="match status" value="1"/>
</dbReference>
<dbReference type="InterPro" id="IPR000715">
    <property type="entry name" value="Glycosyl_transferase_4"/>
</dbReference>
<dbReference type="InterPro" id="IPR003524">
    <property type="entry name" value="PNAcMuramoyl-5peptid_Trfase"/>
</dbReference>
<dbReference type="InterPro" id="IPR018480">
    <property type="entry name" value="PNAcMuramoyl-5peptid_Trfase_CS"/>
</dbReference>
<dbReference type="NCBIfam" id="TIGR00445">
    <property type="entry name" value="mraY"/>
    <property type="match status" value="1"/>
</dbReference>
<dbReference type="PANTHER" id="PTHR22926">
    <property type="entry name" value="PHOSPHO-N-ACETYLMURAMOYL-PENTAPEPTIDE-TRANSFERASE"/>
    <property type="match status" value="1"/>
</dbReference>
<dbReference type="PANTHER" id="PTHR22926:SF5">
    <property type="entry name" value="PHOSPHO-N-ACETYLMURAMOYL-PENTAPEPTIDE-TRANSFERASE HOMOLOG"/>
    <property type="match status" value="1"/>
</dbReference>
<dbReference type="Pfam" id="PF00953">
    <property type="entry name" value="Glycos_transf_4"/>
    <property type="match status" value="1"/>
</dbReference>
<dbReference type="Pfam" id="PF10555">
    <property type="entry name" value="MraY_sig1"/>
    <property type="match status" value="1"/>
</dbReference>
<dbReference type="PROSITE" id="PS01347">
    <property type="entry name" value="MRAY_1"/>
    <property type="match status" value="1"/>
</dbReference>
<dbReference type="PROSITE" id="PS01348">
    <property type="entry name" value="MRAY_2"/>
    <property type="match status" value="1"/>
</dbReference>
<protein>
    <recommendedName>
        <fullName evidence="1">Phospho-N-acetylmuramoyl-pentapeptide-transferase</fullName>
        <ecNumber evidence="1">2.7.8.13</ecNumber>
    </recommendedName>
    <alternativeName>
        <fullName evidence="1">UDP-MurNAc-pentapeptide phosphotransferase</fullName>
    </alternativeName>
</protein>
<sequence>MMKQILFSGVIGLFLTLVGTPLLIKLLARKGYGQYIRDDGPREHHSKRGTPTMGGIAFILATIIAYFMSKVITGYTPTFSGLLVLGLMAGMGLVGFLDDYIKIVKRRSLGLRAKAKMAGQLIVGIAFAVLALQFADNHGNTPASTRLSFVEDFGWTIGPVLFVIWALFMILAMSNGVNLTDGLDGLATGAATMVFGAYTFIGVWQFQESCANAQTLTNPAACYEVRDPLDLAVVASALMGACFGFLWWNTSPAKIFMGDTGSLALGGALAGLAICSRTELLVALLGGLFVLITMSVVIQVGSFRLTGKRVFRMAPLQHHFELKGWSEVLVVVRFWIIQGMCVIVGLGLFYAGWAAKK</sequence>
<feature type="chain" id="PRO_0000108901" description="Phospho-N-acetylmuramoyl-pentapeptide-transferase">
    <location>
        <begin position="1"/>
        <end position="357"/>
    </location>
</feature>
<feature type="transmembrane region" description="Helical" evidence="1">
    <location>
        <begin position="4"/>
        <end position="24"/>
    </location>
</feature>
<feature type="transmembrane region" description="Helical" evidence="1">
    <location>
        <begin position="52"/>
        <end position="72"/>
    </location>
</feature>
<feature type="transmembrane region" description="Helical" evidence="1">
    <location>
        <begin position="77"/>
        <end position="97"/>
    </location>
</feature>
<feature type="transmembrane region" description="Helical" evidence="1">
    <location>
        <begin position="115"/>
        <end position="135"/>
    </location>
</feature>
<feature type="transmembrane region" description="Helical" evidence="1">
    <location>
        <begin position="153"/>
        <end position="173"/>
    </location>
</feature>
<feature type="transmembrane region" description="Helical" evidence="1">
    <location>
        <begin position="186"/>
        <end position="206"/>
    </location>
</feature>
<feature type="transmembrane region" description="Helical" evidence="1">
    <location>
        <begin position="228"/>
        <end position="248"/>
    </location>
</feature>
<feature type="transmembrane region" description="Helical" evidence="1">
    <location>
        <begin position="255"/>
        <end position="275"/>
    </location>
</feature>
<feature type="transmembrane region" description="Helical" evidence="1">
    <location>
        <begin position="280"/>
        <end position="300"/>
    </location>
</feature>
<feature type="transmembrane region" description="Helical" evidence="1">
    <location>
        <begin position="334"/>
        <end position="354"/>
    </location>
</feature>